<protein>
    <recommendedName>
        <fullName evidence="1">Large ribosomal subunit protein bL9</fullName>
    </recommendedName>
    <alternativeName>
        <fullName evidence="3">50S ribosomal protein L9</fullName>
    </alternativeName>
</protein>
<reference key="1">
    <citation type="journal article" date="2011" name="J. Bacteriol.">
        <title>Complete genome sequence and updated annotation of Desulfovibrio alaskensis G20.</title>
        <authorList>
            <person name="Hauser L.J."/>
            <person name="Land M.L."/>
            <person name="Brown S.D."/>
            <person name="Larimer F."/>
            <person name="Keller K.L."/>
            <person name="Rapp-Giles B.J."/>
            <person name="Price M.N."/>
            <person name="Lin M."/>
            <person name="Bruce D.C."/>
            <person name="Detter J.C."/>
            <person name="Tapia R."/>
            <person name="Han C.S."/>
            <person name="Goodwin L.A."/>
            <person name="Cheng J.F."/>
            <person name="Pitluck S."/>
            <person name="Copeland A."/>
            <person name="Lucas S."/>
            <person name="Nolan M."/>
            <person name="Lapidus A.L."/>
            <person name="Palumbo A.V."/>
            <person name="Wall J.D."/>
        </authorList>
    </citation>
    <scope>NUCLEOTIDE SEQUENCE [LARGE SCALE GENOMIC DNA]</scope>
    <source>
        <strain>ATCC BAA-1058 / DSM 17464 / G20</strain>
    </source>
</reference>
<dbReference type="EMBL" id="CP000112">
    <property type="protein sequence ID" value="ABB38209.1"/>
    <property type="status" value="ALT_INIT"/>
    <property type="molecule type" value="Genomic_DNA"/>
</dbReference>
<dbReference type="RefSeq" id="WP_027181447.1">
    <property type="nucleotide sequence ID" value="NC_007519.1"/>
</dbReference>
<dbReference type="SMR" id="Q312D7"/>
<dbReference type="STRING" id="207559.Dde_1410"/>
<dbReference type="KEGG" id="dde:Dde_1410"/>
<dbReference type="eggNOG" id="COG0359">
    <property type="taxonomic scope" value="Bacteria"/>
</dbReference>
<dbReference type="HOGENOM" id="CLU_078938_4_1_7"/>
<dbReference type="Proteomes" id="UP000002710">
    <property type="component" value="Chromosome"/>
</dbReference>
<dbReference type="GO" id="GO:1990904">
    <property type="term" value="C:ribonucleoprotein complex"/>
    <property type="evidence" value="ECO:0007669"/>
    <property type="project" value="UniProtKB-KW"/>
</dbReference>
<dbReference type="GO" id="GO:0005840">
    <property type="term" value="C:ribosome"/>
    <property type="evidence" value="ECO:0007669"/>
    <property type="project" value="UniProtKB-KW"/>
</dbReference>
<dbReference type="GO" id="GO:0019843">
    <property type="term" value="F:rRNA binding"/>
    <property type="evidence" value="ECO:0007669"/>
    <property type="project" value="UniProtKB-UniRule"/>
</dbReference>
<dbReference type="GO" id="GO:0003735">
    <property type="term" value="F:structural constituent of ribosome"/>
    <property type="evidence" value="ECO:0007669"/>
    <property type="project" value="InterPro"/>
</dbReference>
<dbReference type="GO" id="GO:0006412">
    <property type="term" value="P:translation"/>
    <property type="evidence" value="ECO:0007669"/>
    <property type="project" value="UniProtKB-UniRule"/>
</dbReference>
<dbReference type="FunFam" id="3.40.5.10:FF:000003">
    <property type="entry name" value="50S ribosomal protein L9"/>
    <property type="match status" value="1"/>
</dbReference>
<dbReference type="Gene3D" id="3.10.430.100">
    <property type="entry name" value="Ribosomal protein L9, C-terminal domain"/>
    <property type="match status" value="1"/>
</dbReference>
<dbReference type="Gene3D" id="3.40.5.10">
    <property type="entry name" value="Ribosomal protein L9, N-terminal domain"/>
    <property type="match status" value="1"/>
</dbReference>
<dbReference type="HAMAP" id="MF_00503">
    <property type="entry name" value="Ribosomal_bL9"/>
    <property type="match status" value="1"/>
</dbReference>
<dbReference type="InterPro" id="IPR000244">
    <property type="entry name" value="Ribosomal_bL9"/>
</dbReference>
<dbReference type="InterPro" id="IPR009027">
    <property type="entry name" value="Ribosomal_bL9/RNase_H1_N"/>
</dbReference>
<dbReference type="InterPro" id="IPR020594">
    <property type="entry name" value="Ribosomal_bL9_bac/chp"/>
</dbReference>
<dbReference type="InterPro" id="IPR020069">
    <property type="entry name" value="Ribosomal_bL9_C"/>
</dbReference>
<dbReference type="InterPro" id="IPR036791">
    <property type="entry name" value="Ribosomal_bL9_C_sf"/>
</dbReference>
<dbReference type="InterPro" id="IPR020070">
    <property type="entry name" value="Ribosomal_bL9_N"/>
</dbReference>
<dbReference type="InterPro" id="IPR036935">
    <property type="entry name" value="Ribosomal_bL9_N_sf"/>
</dbReference>
<dbReference type="NCBIfam" id="TIGR00158">
    <property type="entry name" value="L9"/>
    <property type="match status" value="1"/>
</dbReference>
<dbReference type="PANTHER" id="PTHR21368">
    <property type="entry name" value="50S RIBOSOMAL PROTEIN L9"/>
    <property type="match status" value="1"/>
</dbReference>
<dbReference type="Pfam" id="PF03948">
    <property type="entry name" value="Ribosomal_L9_C"/>
    <property type="match status" value="1"/>
</dbReference>
<dbReference type="Pfam" id="PF01281">
    <property type="entry name" value="Ribosomal_L9_N"/>
    <property type="match status" value="1"/>
</dbReference>
<dbReference type="SUPFAM" id="SSF55658">
    <property type="entry name" value="L9 N-domain-like"/>
    <property type="match status" value="1"/>
</dbReference>
<dbReference type="SUPFAM" id="SSF55653">
    <property type="entry name" value="Ribosomal protein L9 C-domain"/>
    <property type="match status" value="1"/>
</dbReference>
<dbReference type="PROSITE" id="PS00651">
    <property type="entry name" value="RIBOSOMAL_L9"/>
    <property type="match status" value="1"/>
</dbReference>
<sequence length="170" mass="18353">MKVILRADVENLGKLGDIVEVRPGYGRNFLLPQGMAMAATASNMKVFEMERRKLQAEMDAVRATATTLAEKIAAADVSIAVRVGENDKLYGSVTPAHIADALAEAGVEIDRRRILLDAPIRNLGEYDVRVRLHADVEAVIALKVVAEGRTEEADAEESAAEEPAVEEAAE</sequence>
<organism>
    <name type="scientific">Oleidesulfovibrio alaskensis (strain ATCC BAA-1058 / DSM 17464 / G20)</name>
    <name type="common">Desulfovibrio alaskensis</name>
    <dbReference type="NCBI Taxonomy" id="207559"/>
    <lineage>
        <taxon>Bacteria</taxon>
        <taxon>Pseudomonadati</taxon>
        <taxon>Thermodesulfobacteriota</taxon>
        <taxon>Desulfovibrionia</taxon>
        <taxon>Desulfovibrionales</taxon>
        <taxon>Desulfovibrionaceae</taxon>
        <taxon>Oleidesulfovibrio</taxon>
    </lineage>
</organism>
<name>RL9_OLEA2</name>
<keyword id="KW-1185">Reference proteome</keyword>
<keyword id="KW-0687">Ribonucleoprotein</keyword>
<keyword id="KW-0689">Ribosomal protein</keyword>
<keyword id="KW-0694">RNA-binding</keyword>
<keyword id="KW-0699">rRNA-binding</keyword>
<comment type="function">
    <text evidence="1">Binds to the 23S rRNA.</text>
</comment>
<comment type="similarity">
    <text evidence="1">Belongs to the bacterial ribosomal protein bL9 family.</text>
</comment>
<comment type="sequence caution" evidence="3">
    <conflict type="erroneous initiation">
        <sequence resource="EMBL-CDS" id="ABB38209"/>
    </conflict>
</comment>
<gene>
    <name evidence="1" type="primary">rplI</name>
    <name type="ordered locus">Dde_1410</name>
</gene>
<evidence type="ECO:0000255" key="1">
    <source>
        <dbReference type="HAMAP-Rule" id="MF_00503"/>
    </source>
</evidence>
<evidence type="ECO:0000256" key="2">
    <source>
        <dbReference type="SAM" id="MobiDB-lite"/>
    </source>
</evidence>
<evidence type="ECO:0000305" key="3"/>
<proteinExistence type="inferred from homology"/>
<accession>Q312D7</accession>
<feature type="chain" id="PRO_0000236518" description="Large ribosomal subunit protein bL9">
    <location>
        <begin position="1"/>
        <end position="170"/>
    </location>
</feature>
<feature type="region of interest" description="Disordered" evidence="2">
    <location>
        <begin position="149"/>
        <end position="170"/>
    </location>
</feature>
<feature type="compositionally biased region" description="Acidic residues" evidence="2">
    <location>
        <begin position="153"/>
        <end position="170"/>
    </location>
</feature>